<organism>
    <name type="scientific">Teredinibacter turnerae (strain ATCC 39867 / T7901)</name>
    <dbReference type="NCBI Taxonomy" id="377629"/>
    <lineage>
        <taxon>Bacteria</taxon>
        <taxon>Pseudomonadati</taxon>
        <taxon>Pseudomonadota</taxon>
        <taxon>Gammaproteobacteria</taxon>
        <taxon>Cellvibrionales</taxon>
        <taxon>Cellvibrionaceae</taxon>
        <taxon>Teredinibacter</taxon>
    </lineage>
</organism>
<comment type="function">
    <text evidence="1">Cell wall formation.</text>
</comment>
<comment type="catalytic activity">
    <reaction evidence="1">
        <text>UDP-N-acetyl-alpha-D-muramate + L-alanine + ATP = UDP-N-acetyl-alpha-D-muramoyl-L-alanine + ADP + phosphate + H(+)</text>
        <dbReference type="Rhea" id="RHEA:23372"/>
        <dbReference type="ChEBI" id="CHEBI:15378"/>
        <dbReference type="ChEBI" id="CHEBI:30616"/>
        <dbReference type="ChEBI" id="CHEBI:43474"/>
        <dbReference type="ChEBI" id="CHEBI:57972"/>
        <dbReference type="ChEBI" id="CHEBI:70757"/>
        <dbReference type="ChEBI" id="CHEBI:83898"/>
        <dbReference type="ChEBI" id="CHEBI:456216"/>
        <dbReference type="EC" id="6.3.2.8"/>
    </reaction>
</comment>
<comment type="pathway">
    <text evidence="1">Cell wall biogenesis; peptidoglycan biosynthesis.</text>
</comment>
<comment type="subcellular location">
    <subcellularLocation>
        <location evidence="1">Cytoplasm</location>
    </subcellularLocation>
</comment>
<comment type="similarity">
    <text evidence="1">Belongs to the MurCDEF family.</text>
</comment>
<feature type="chain" id="PRO_1000202191" description="UDP-N-acetylmuramate--L-alanine ligase">
    <location>
        <begin position="1"/>
        <end position="473"/>
    </location>
</feature>
<feature type="binding site" evidence="1">
    <location>
        <begin position="122"/>
        <end position="128"/>
    </location>
    <ligand>
        <name>ATP</name>
        <dbReference type="ChEBI" id="CHEBI:30616"/>
    </ligand>
</feature>
<dbReference type="EC" id="6.3.2.8" evidence="1"/>
<dbReference type="EMBL" id="CP001614">
    <property type="protein sequence ID" value="ACR12388.1"/>
    <property type="molecule type" value="Genomic_DNA"/>
</dbReference>
<dbReference type="RefSeq" id="WP_015818500.1">
    <property type="nucleotide sequence ID" value="NC_012997.1"/>
</dbReference>
<dbReference type="SMR" id="C5BP33"/>
<dbReference type="STRING" id="377629.TERTU_3048"/>
<dbReference type="KEGG" id="ttu:TERTU_3048"/>
<dbReference type="eggNOG" id="COG0773">
    <property type="taxonomic scope" value="Bacteria"/>
</dbReference>
<dbReference type="HOGENOM" id="CLU_028104_2_2_6"/>
<dbReference type="OrthoDB" id="9804126at2"/>
<dbReference type="UniPathway" id="UPA00219"/>
<dbReference type="Proteomes" id="UP000009080">
    <property type="component" value="Chromosome"/>
</dbReference>
<dbReference type="GO" id="GO:0005737">
    <property type="term" value="C:cytoplasm"/>
    <property type="evidence" value="ECO:0007669"/>
    <property type="project" value="UniProtKB-SubCell"/>
</dbReference>
<dbReference type="GO" id="GO:0005524">
    <property type="term" value="F:ATP binding"/>
    <property type="evidence" value="ECO:0007669"/>
    <property type="project" value="UniProtKB-UniRule"/>
</dbReference>
<dbReference type="GO" id="GO:0008763">
    <property type="term" value="F:UDP-N-acetylmuramate-L-alanine ligase activity"/>
    <property type="evidence" value="ECO:0007669"/>
    <property type="project" value="UniProtKB-UniRule"/>
</dbReference>
<dbReference type="GO" id="GO:0051301">
    <property type="term" value="P:cell division"/>
    <property type="evidence" value="ECO:0007669"/>
    <property type="project" value="UniProtKB-KW"/>
</dbReference>
<dbReference type="GO" id="GO:0071555">
    <property type="term" value="P:cell wall organization"/>
    <property type="evidence" value="ECO:0007669"/>
    <property type="project" value="UniProtKB-KW"/>
</dbReference>
<dbReference type="GO" id="GO:0009252">
    <property type="term" value="P:peptidoglycan biosynthetic process"/>
    <property type="evidence" value="ECO:0007669"/>
    <property type="project" value="UniProtKB-UniRule"/>
</dbReference>
<dbReference type="GO" id="GO:0008360">
    <property type="term" value="P:regulation of cell shape"/>
    <property type="evidence" value="ECO:0007669"/>
    <property type="project" value="UniProtKB-KW"/>
</dbReference>
<dbReference type="FunFam" id="3.40.1190.10:FF:000001">
    <property type="entry name" value="UDP-N-acetylmuramate--L-alanine ligase"/>
    <property type="match status" value="1"/>
</dbReference>
<dbReference type="FunFam" id="3.40.50.720:FF:000046">
    <property type="entry name" value="UDP-N-acetylmuramate--L-alanine ligase"/>
    <property type="match status" value="1"/>
</dbReference>
<dbReference type="Gene3D" id="3.90.190.20">
    <property type="entry name" value="Mur ligase, C-terminal domain"/>
    <property type="match status" value="1"/>
</dbReference>
<dbReference type="Gene3D" id="3.40.1190.10">
    <property type="entry name" value="Mur-like, catalytic domain"/>
    <property type="match status" value="1"/>
</dbReference>
<dbReference type="Gene3D" id="3.40.50.720">
    <property type="entry name" value="NAD(P)-binding Rossmann-like Domain"/>
    <property type="match status" value="1"/>
</dbReference>
<dbReference type="HAMAP" id="MF_00046">
    <property type="entry name" value="MurC"/>
    <property type="match status" value="1"/>
</dbReference>
<dbReference type="InterPro" id="IPR036565">
    <property type="entry name" value="Mur-like_cat_sf"/>
</dbReference>
<dbReference type="InterPro" id="IPR004101">
    <property type="entry name" value="Mur_ligase_C"/>
</dbReference>
<dbReference type="InterPro" id="IPR036615">
    <property type="entry name" value="Mur_ligase_C_dom_sf"/>
</dbReference>
<dbReference type="InterPro" id="IPR013221">
    <property type="entry name" value="Mur_ligase_cen"/>
</dbReference>
<dbReference type="InterPro" id="IPR000713">
    <property type="entry name" value="Mur_ligase_N"/>
</dbReference>
<dbReference type="InterPro" id="IPR050061">
    <property type="entry name" value="MurCDEF_pg_biosynth"/>
</dbReference>
<dbReference type="InterPro" id="IPR005758">
    <property type="entry name" value="UDP-N-AcMur_Ala_ligase_MurC"/>
</dbReference>
<dbReference type="NCBIfam" id="TIGR01082">
    <property type="entry name" value="murC"/>
    <property type="match status" value="1"/>
</dbReference>
<dbReference type="PANTHER" id="PTHR43445:SF3">
    <property type="entry name" value="UDP-N-ACETYLMURAMATE--L-ALANINE LIGASE"/>
    <property type="match status" value="1"/>
</dbReference>
<dbReference type="PANTHER" id="PTHR43445">
    <property type="entry name" value="UDP-N-ACETYLMURAMATE--L-ALANINE LIGASE-RELATED"/>
    <property type="match status" value="1"/>
</dbReference>
<dbReference type="Pfam" id="PF01225">
    <property type="entry name" value="Mur_ligase"/>
    <property type="match status" value="1"/>
</dbReference>
<dbReference type="Pfam" id="PF02875">
    <property type="entry name" value="Mur_ligase_C"/>
    <property type="match status" value="1"/>
</dbReference>
<dbReference type="Pfam" id="PF08245">
    <property type="entry name" value="Mur_ligase_M"/>
    <property type="match status" value="1"/>
</dbReference>
<dbReference type="SUPFAM" id="SSF51984">
    <property type="entry name" value="MurCD N-terminal domain"/>
    <property type="match status" value="1"/>
</dbReference>
<dbReference type="SUPFAM" id="SSF53623">
    <property type="entry name" value="MurD-like peptide ligases, catalytic domain"/>
    <property type="match status" value="1"/>
</dbReference>
<dbReference type="SUPFAM" id="SSF53244">
    <property type="entry name" value="MurD-like peptide ligases, peptide-binding domain"/>
    <property type="match status" value="1"/>
</dbReference>
<sequence length="473" mass="51698">MQQPDIHFIPEMRRIRRIHFVGVGGAGMSGIAEVLHNQGYLISGSDLRESDVTRRLSAMGMTIYVGHHAKNVHGVDVVVNSSAVDEANPELLEARQQRIPVVRRAEMLGELMRYRHGIAVAGTHGKTTTTSLIASIFAEGDKDPTFVIGGLLNSAGTNAALGASRYLVAEADESDASFLHLQPMVAVVTNIDADHMDTYGGDFGTLKKTFVEFLHNLPFYGVAVMCGDDPVITSLIPDIARTVITYGFSEDCDFKAYDVKQESGKQRFKIKRPEGEPLDIYLNMPGQHNVLNATAAVAVATDEGIDDIAIQQGLAQFMGVGRRFQIYGDYPLPQGGSVMLVDDYGHHPREVAATIRAVRDSWPDRRLFMVYQPHRYTRTRDLYEDFVEVLSSVDQLVLLEVYAAGEEPIPGADGRHLSRTIRTRGLVDPIFVEGIEGVPAVVKDLVKPGDIIITQGAGNVGSLAPTLAKKKFA</sequence>
<accession>C5BP33</accession>
<gene>
    <name evidence="1" type="primary">murC</name>
    <name type="ordered locus">TERTU_3048</name>
</gene>
<name>MURC_TERTT</name>
<reference key="1">
    <citation type="journal article" date="2009" name="PLoS ONE">
        <title>The complete genome of Teredinibacter turnerae T7901: an intracellular endosymbiont of marine wood-boring bivalves (shipworms).</title>
        <authorList>
            <person name="Yang J.C."/>
            <person name="Madupu R."/>
            <person name="Durkin A.S."/>
            <person name="Ekborg N.A."/>
            <person name="Pedamallu C.S."/>
            <person name="Hostetler J.B."/>
            <person name="Radune D."/>
            <person name="Toms B.S."/>
            <person name="Henrissat B."/>
            <person name="Coutinho P.M."/>
            <person name="Schwarz S."/>
            <person name="Field L."/>
            <person name="Trindade-Silva A.E."/>
            <person name="Soares C.A.G."/>
            <person name="Elshahawi S."/>
            <person name="Hanora A."/>
            <person name="Schmidt E.W."/>
            <person name="Haygood M.G."/>
            <person name="Posfai J."/>
            <person name="Benner J."/>
            <person name="Madinger C."/>
            <person name="Nove J."/>
            <person name="Anton B."/>
            <person name="Chaudhary K."/>
            <person name="Foster J."/>
            <person name="Holman A."/>
            <person name="Kumar S."/>
            <person name="Lessard P.A."/>
            <person name="Luyten Y.A."/>
            <person name="Slatko B."/>
            <person name="Wood N."/>
            <person name="Wu B."/>
            <person name="Teplitski M."/>
            <person name="Mougous J.D."/>
            <person name="Ward N."/>
            <person name="Eisen J.A."/>
            <person name="Badger J.H."/>
            <person name="Distel D.L."/>
        </authorList>
    </citation>
    <scope>NUCLEOTIDE SEQUENCE [LARGE SCALE GENOMIC DNA]</scope>
    <source>
        <strain>ATCC 39867 / T7901</strain>
    </source>
</reference>
<protein>
    <recommendedName>
        <fullName evidence="1">UDP-N-acetylmuramate--L-alanine ligase</fullName>
        <ecNumber evidence="1">6.3.2.8</ecNumber>
    </recommendedName>
    <alternativeName>
        <fullName evidence="1">UDP-N-acetylmuramoyl-L-alanine synthetase</fullName>
    </alternativeName>
</protein>
<proteinExistence type="inferred from homology"/>
<evidence type="ECO:0000255" key="1">
    <source>
        <dbReference type="HAMAP-Rule" id="MF_00046"/>
    </source>
</evidence>
<keyword id="KW-0067">ATP-binding</keyword>
<keyword id="KW-0131">Cell cycle</keyword>
<keyword id="KW-0132">Cell division</keyword>
<keyword id="KW-0133">Cell shape</keyword>
<keyword id="KW-0961">Cell wall biogenesis/degradation</keyword>
<keyword id="KW-0963">Cytoplasm</keyword>
<keyword id="KW-0436">Ligase</keyword>
<keyword id="KW-0547">Nucleotide-binding</keyword>
<keyword id="KW-0573">Peptidoglycan synthesis</keyword>
<keyword id="KW-1185">Reference proteome</keyword>